<keyword id="KW-0028">Amino-acid biosynthesis</keyword>
<keyword id="KW-0479">Metal-binding</keyword>
<keyword id="KW-0486">Methionine biosynthesis</keyword>
<keyword id="KW-0489">Methyltransferase</keyword>
<keyword id="KW-1185">Reference proteome</keyword>
<keyword id="KW-0677">Repeat</keyword>
<keyword id="KW-0808">Transferase</keyword>
<keyword id="KW-0862">Zinc</keyword>
<accession>Q8G651</accession>
<gene>
    <name evidence="1" type="primary">metE</name>
    <name type="ordered locus">BL0798</name>
</gene>
<comment type="function">
    <text evidence="1">Catalyzes the transfer of a methyl group from 5-methyltetrahydrofolate to homocysteine resulting in methionine formation.</text>
</comment>
<comment type="catalytic activity">
    <reaction evidence="1">
        <text>5-methyltetrahydropteroyltri-L-glutamate + L-homocysteine = tetrahydropteroyltri-L-glutamate + L-methionine</text>
        <dbReference type="Rhea" id="RHEA:21196"/>
        <dbReference type="ChEBI" id="CHEBI:57844"/>
        <dbReference type="ChEBI" id="CHEBI:58140"/>
        <dbReference type="ChEBI" id="CHEBI:58199"/>
        <dbReference type="ChEBI" id="CHEBI:58207"/>
        <dbReference type="EC" id="2.1.1.14"/>
    </reaction>
</comment>
<comment type="cofactor">
    <cofactor evidence="1">
        <name>Zn(2+)</name>
        <dbReference type="ChEBI" id="CHEBI:29105"/>
    </cofactor>
    <text evidence="1">Binds 1 zinc ion per subunit.</text>
</comment>
<comment type="pathway">
    <text evidence="1">Amino-acid biosynthesis; L-methionine biosynthesis via de novo pathway; L-methionine from L-homocysteine (MetE route): step 1/1.</text>
</comment>
<comment type="similarity">
    <text evidence="1">Belongs to the vitamin-B12 independent methionine synthase family.</text>
</comment>
<protein>
    <recommendedName>
        <fullName evidence="1">5-methyltetrahydropteroyltriglutamate--homocysteine methyltransferase</fullName>
        <ecNumber evidence="1">2.1.1.14</ecNumber>
    </recommendedName>
    <alternativeName>
        <fullName evidence="1">Cobalamin-independent methionine synthase</fullName>
    </alternativeName>
    <alternativeName>
        <fullName evidence="1">Methionine synthase, vitamin-B12 independent isozyme</fullName>
    </alternativeName>
</protein>
<reference key="1">
    <citation type="journal article" date="2002" name="Proc. Natl. Acad. Sci. U.S.A.">
        <title>The genome sequence of Bifidobacterium longum reflects its adaptation to the human gastrointestinal tract.</title>
        <authorList>
            <person name="Schell M.A."/>
            <person name="Karmirantzou M."/>
            <person name="Snel B."/>
            <person name="Vilanova D."/>
            <person name="Berger B."/>
            <person name="Pessi G."/>
            <person name="Zwahlen M.-C."/>
            <person name="Desiere F."/>
            <person name="Bork P."/>
            <person name="Delley M."/>
            <person name="Pridmore R.D."/>
            <person name="Arigoni F."/>
        </authorList>
    </citation>
    <scope>NUCLEOTIDE SEQUENCE [LARGE SCALE GENOMIC DNA]</scope>
    <source>
        <strain>NCC 2705</strain>
    </source>
</reference>
<dbReference type="EC" id="2.1.1.14" evidence="1"/>
<dbReference type="EMBL" id="AE014295">
    <property type="protein sequence ID" value="AAN24613.1"/>
    <property type="molecule type" value="Genomic_DNA"/>
</dbReference>
<dbReference type="RefSeq" id="NP_695977.1">
    <property type="nucleotide sequence ID" value="NC_004307.2"/>
</dbReference>
<dbReference type="RefSeq" id="WP_007052219.1">
    <property type="nucleotide sequence ID" value="NC_004307.2"/>
</dbReference>
<dbReference type="SMR" id="Q8G651"/>
<dbReference type="STRING" id="206672.BL0798"/>
<dbReference type="EnsemblBacteria" id="AAN24613">
    <property type="protein sequence ID" value="AAN24613"/>
    <property type="gene ID" value="BL0798"/>
</dbReference>
<dbReference type="GeneID" id="69578049"/>
<dbReference type="KEGG" id="blo:BL0798"/>
<dbReference type="PATRIC" id="fig|206672.9.peg.499"/>
<dbReference type="HOGENOM" id="CLU_013175_0_0_11"/>
<dbReference type="OrthoDB" id="244285at2"/>
<dbReference type="PhylomeDB" id="Q8G651"/>
<dbReference type="UniPathway" id="UPA00051">
    <property type="reaction ID" value="UER00082"/>
</dbReference>
<dbReference type="Proteomes" id="UP000000439">
    <property type="component" value="Chromosome"/>
</dbReference>
<dbReference type="GO" id="GO:0003871">
    <property type="term" value="F:5-methyltetrahydropteroyltriglutamate-homocysteine S-methyltransferase activity"/>
    <property type="evidence" value="ECO:0007669"/>
    <property type="project" value="UniProtKB-UniRule"/>
</dbReference>
<dbReference type="GO" id="GO:0008270">
    <property type="term" value="F:zinc ion binding"/>
    <property type="evidence" value="ECO:0007669"/>
    <property type="project" value="InterPro"/>
</dbReference>
<dbReference type="GO" id="GO:0009086">
    <property type="term" value="P:methionine biosynthetic process"/>
    <property type="evidence" value="ECO:0007669"/>
    <property type="project" value="UniProtKB-UniRule"/>
</dbReference>
<dbReference type="GO" id="GO:0032259">
    <property type="term" value="P:methylation"/>
    <property type="evidence" value="ECO:0007669"/>
    <property type="project" value="UniProtKB-KW"/>
</dbReference>
<dbReference type="CDD" id="cd03311">
    <property type="entry name" value="CIMS_C_terminal_like"/>
    <property type="match status" value="1"/>
</dbReference>
<dbReference type="CDD" id="cd03312">
    <property type="entry name" value="CIMS_N_terminal_like"/>
    <property type="match status" value="1"/>
</dbReference>
<dbReference type="Gene3D" id="3.20.20.210">
    <property type="match status" value="2"/>
</dbReference>
<dbReference type="HAMAP" id="MF_00172">
    <property type="entry name" value="Meth_synth"/>
    <property type="match status" value="1"/>
</dbReference>
<dbReference type="InterPro" id="IPR013215">
    <property type="entry name" value="Cbl-indep_Met_Synth_N"/>
</dbReference>
<dbReference type="InterPro" id="IPR006276">
    <property type="entry name" value="Cobalamin-indep_Met_synthase"/>
</dbReference>
<dbReference type="InterPro" id="IPR002629">
    <property type="entry name" value="Met_Synth_C/arc"/>
</dbReference>
<dbReference type="InterPro" id="IPR038071">
    <property type="entry name" value="UROD/MetE-like_sf"/>
</dbReference>
<dbReference type="NCBIfam" id="TIGR01371">
    <property type="entry name" value="met_syn_B12ind"/>
    <property type="match status" value="1"/>
</dbReference>
<dbReference type="NCBIfam" id="NF003556">
    <property type="entry name" value="PRK05222.1"/>
    <property type="match status" value="1"/>
</dbReference>
<dbReference type="PANTHER" id="PTHR30519">
    <property type="entry name" value="5-METHYLTETRAHYDROPTEROYLTRIGLUTAMATE--HOMOCYSTEINE METHYLTRANSFERASE"/>
    <property type="match status" value="1"/>
</dbReference>
<dbReference type="Pfam" id="PF08267">
    <property type="entry name" value="Meth_synt_1"/>
    <property type="match status" value="1"/>
</dbReference>
<dbReference type="Pfam" id="PF01717">
    <property type="entry name" value="Meth_synt_2"/>
    <property type="match status" value="1"/>
</dbReference>
<dbReference type="PIRSF" id="PIRSF000382">
    <property type="entry name" value="MeTrfase_B12_ind"/>
    <property type="match status" value="1"/>
</dbReference>
<dbReference type="SUPFAM" id="SSF51726">
    <property type="entry name" value="UROD/MetE-like"/>
    <property type="match status" value="2"/>
</dbReference>
<name>METE_BIFLO</name>
<sequence length="767" mass="85359">MSTLTSVSGFPRIGQNRELKKIIEGYWKGANDLAAVKATAAELRAKHWKLQQAAGIDLIPSNDFSYYDQMLDTAILLNVIPQRYARLSFDNQEDTLFAMARGYQGDKGDVTALPMKKWFTTNYHYLVPEVESAAEIKLNSTKPFDEFNEAKALGIDTKPVFIGPYTFLKLARTPEATELELDKGLVNAVAAVYVEVLAKFNELGAAWVQLDEPYLVLDKEPGDVELFKTLYTKILSAKGNVKVLLNTYFGHIADVYETVNLLGFDGIGLDLNEGREENLEAVAKYGVASNTTIFAGVINGRNIWRNNYATSLGLVDALKQVTANVAVSTASSLLHVPFSTEGETGIPAEDLKHFAFAVQKLDELKEVAALADATEDEKKASAALAANQALFDGTRVAADPAVAERIGKLSDADYVRQPAREERQALQREALGLPLLPTTTIGSFPQTKEIRAERAKLRKGEVTKEAYDEFIKAQIDAVIKKQEEIGLDVLVHGEFERNDMVEYFGQNLNGFLFTKNAWVQSYGTRCVKPPIVWGDVSRANPITVEWSAYAQSKTDHVMKGMLTGPVTILNWSWPREDITHEEQTKQLALAIRDEVLDLEAAGIKVIQIDEAALREKLPLRKSDWHVKYLDWAVPAFRLVHSAVKPTTQIHTHMCYSEFNDIIRDIDAMDADVISFEASRGDLVVLDAIHDAHFETEAGPGVYDIHSPRIPSEKEIEDRIYEILDKMDVKKVWINPDCGLKTRGNAETWPSLENLVAAAKAVRAKLDK</sequence>
<organism>
    <name type="scientific">Bifidobacterium longum (strain NCC 2705)</name>
    <dbReference type="NCBI Taxonomy" id="206672"/>
    <lineage>
        <taxon>Bacteria</taxon>
        <taxon>Bacillati</taxon>
        <taxon>Actinomycetota</taxon>
        <taxon>Actinomycetes</taxon>
        <taxon>Bifidobacteriales</taxon>
        <taxon>Bifidobacteriaceae</taxon>
        <taxon>Bifidobacterium</taxon>
    </lineage>
</organism>
<evidence type="ECO:0000255" key="1">
    <source>
        <dbReference type="HAMAP-Rule" id="MF_00172"/>
    </source>
</evidence>
<feature type="chain" id="PRO_0000098614" description="5-methyltetrahydropteroyltriglutamate--homocysteine methyltransferase">
    <location>
        <begin position="1"/>
        <end position="767"/>
    </location>
</feature>
<feature type="active site" description="Proton donor" evidence="1">
    <location>
        <position position="705"/>
    </location>
</feature>
<feature type="binding site" evidence="1">
    <location>
        <begin position="17"/>
        <end position="20"/>
    </location>
    <ligand>
        <name>5-methyltetrahydropteroyltri-L-glutamate</name>
        <dbReference type="ChEBI" id="CHEBI:58207"/>
    </ligand>
</feature>
<feature type="binding site" evidence="1">
    <location>
        <position position="117"/>
    </location>
    <ligand>
        <name>5-methyltetrahydropteroyltri-L-glutamate</name>
        <dbReference type="ChEBI" id="CHEBI:58207"/>
    </ligand>
</feature>
<feature type="binding site" evidence="1">
    <location>
        <begin position="441"/>
        <end position="443"/>
    </location>
    <ligand>
        <name>L-homocysteine</name>
        <dbReference type="ChEBI" id="CHEBI:58199"/>
    </ligand>
</feature>
<feature type="binding site" evidence="1">
    <location>
        <begin position="441"/>
        <end position="443"/>
    </location>
    <ligand>
        <name>L-methionine</name>
        <dbReference type="ChEBI" id="CHEBI:57844"/>
    </ligand>
</feature>
<feature type="binding site" evidence="1">
    <location>
        <position position="494"/>
    </location>
    <ligand>
        <name>L-homocysteine</name>
        <dbReference type="ChEBI" id="CHEBI:58199"/>
    </ligand>
</feature>
<feature type="binding site" evidence="1">
    <location>
        <position position="494"/>
    </location>
    <ligand>
        <name>L-methionine</name>
        <dbReference type="ChEBI" id="CHEBI:57844"/>
    </ligand>
</feature>
<feature type="binding site" evidence="1">
    <location>
        <begin position="525"/>
        <end position="526"/>
    </location>
    <ligand>
        <name>5-methyltetrahydropteroyltri-L-glutamate</name>
        <dbReference type="ChEBI" id="CHEBI:58207"/>
    </ligand>
</feature>
<feature type="binding site" evidence="1">
    <location>
        <position position="571"/>
    </location>
    <ligand>
        <name>5-methyltetrahydropteroyltri-L-glutamate</name>
        <dbReference type="ChEBI" id="CHEBI:58207"/>
    </ligand>
</feature>
<feature type="binding site" evidence="1">
    <location>
        <position position="609"/>
    </location>
    <ligand>
        <name>L-homocysteine</name>
        <dbReference type="ChEBI" id="CHEBI:58199"/>
    </ligand>
</feature>
<feature type="binding site" evidence="1">
    <location>
        <position position="609"/>
    </location>
    <ligand>
        <name>L-methionine</name>
        <dbReference type="ChEBI" id="CHEBI:57844"/>
    </ligand>
</feature>
<feature type="binding site" evidence="1">
    <location>
        <position position="615"/>
    </location>
    <ligand>
        <name>5-methyltetrahydropteroyltri-L-glutamate</name>
        <dbReference type="ChEBI" id="CHEBI:58207"/>
    </ligand>
</feature>
<feature type="binding site" evidence="1">
    <location>
        <position position="652"/>
    </location>
    <ligand>
        <name>Zn(2+)</name>
        <dbReference type="ChEBI" id="CHEBI:29105"/>
        <note>catalytic</note>
    </ligand>
</feature>
<feature type="binding site" evidence="1">
    <location>
        <position position="654"/>
    </location>
    <ligand>
        <name>Zn(2+)</name>
        <dbReference type="ChEBI" id="CHEBI:29105"/>
        <note>catalytic</note>
    </ligand>
</feature>
<feature type="binding site" evidence="1">
    <location>
        <position position="676"/>
    </location>
    <ligand>
        <name>Zn(2+)</name>
        <dbReference type="ChEBI" id="CHEBI:29105"/>
        <note>catalytic</note>
    </ligand>
</feature>
<feature type="binding site" evidence="1">
    <location>
        <position position="737"/>
    </location>
    <ligand>
        <name>Zn(2+)</name>
        <dbReference type="ChEBI" id="CHEBI:29105"/>
        <note>catalytic</note>
    </ligand>
</feature>
<proteinExistence type="inferred from homology"/>